<reference key="1">
    <citation type="journal article" date="2005" name="Plant Cell">
        <title>Arabidopsis membrane steroid binding protein 1 is involved in inhibition of cell elongation.</title>
        <authorList>
            <person name="Yang X.-H."/>
            <person name="Xu Z.-H."/>
            <person name="Xue H.-W."/>
        </authorList>
    </citation>
    <scope>NUCLEOTIDE SEQUENCE [MRNA]</scope>
    <scope>CHARACTERIZATION</scope>
    <scope>SUBCELLULAR LOCATION</scope>
    <scope>TISSUE SPECIFICITY</scope>
    <source>
        <strain>cv. Columbia</strain>
    </source>
</reference>
<reference key="2">
    <citation type="submission" date="1999-05" db="EMBL/GenBank/DDBJ databases">
        <title>Plant homologues of mammalian putative progesterone-binding membrane proteins.</title>
        <authorList>
            <person name="Choi J.H."/>
            <person name="Choi H."/>
            <person name="Gray P."/>
        </authorList>
    </citation>
    <scope>NUCLEOTIDE SEQUENCE [MRNA]</scope>
    <source>
        <strain>cv. Columbia</strain>
    </source>
</reference>
<reference key="3">
    <citation type="submission" date="1999-04" db="EMBL/GenBank/DDBJ databases">
        <title>Structural analysis of Arabidopsis thaliana chromosome 5. XI.</title>
        <authorList>
            <person name="Kaneko T."/>
            <person name="Katoh T."/>
            <person name="Asamizu E."/>
            <person name="Sato S."/>
            <person name="Nakamura Y."/>
            <person name="Kotani H."/>
            <person name="Tabata S."/>
        </authorList>
    </citation>
    <scope>NUCLEOTIDE SEQUENCE [LARGE SCALE GENOMIC DNA]</scope>
    <source>
        <strain>cv. Columbia</strain>
    </source>
</reference>
<reference key="4">
    <citation type="journal article" date="2017" name="Plant J.">
        <title>Araport11: a complete reannotation of the Arabidopsis thaliana reference genome.</title>
        <authorList>
            <person name="Cheng C.Y."/>
            <person name="Krishnakumar V."/>
            <person name="Chan A.P."/>
            <person name="Thibaud-Nissen F."/>
            <person name="Schobel S."/>
            <person name="Town C.D."/>
        </authorList>
    </citation>
    <scope>GENOME REANNOTATION</scope>
    <source>
        <strain>cv. Columbia</strain>
    </source>
</reference>
<reference key="5">
    <citation type="journal article" date="2003" name="Science">
        <title>Empirical analysis of transcriptional activity in the Arabidopsis genome.</title>
        <authorList>
            <person name="Yamada K."/>
            <person name="Lim J."/>
            <person name="Dale J.M."/>
            <person name="Chen H."/>
            <person name="Shinn P."/>
            <person name="Palm C.J."/>
            <person name="Southwick A.M."/>
            <person name="Wu H.C."/>
            <person name="Kim C.J."/>
            <person name="Nguyen M."/>
            <person name="Pham P.K."/>
            <person name="Cheuk R.F."/>
            <person name="Karlin-Newmann G."/>
            <person name="Liu S.X."/>
            <person name="Lam B."/>
            <person name="Sakano H."/>
            <person name="Wu T."/>
            <person name="Yu G."/>
            <person name="Miranda M."/>
            <person name="Quach H.L."/>
            <person name="Tripp M."/>
            <person name="Chang C.H."/>
            <person name="Lee J.M."/>
            <person name="Toriumi M.J."/>
            <person name="Chan M.M."/>
            <person name="Tang C.C."/>
            <person name="Onodera C.S."/>
            <person name="Deng J.M."/>
            <person name="Akiyama K."/>
            <person name="Ansari Y."/>
            <person name="Arakawa T."/>
            <person name="Banh J."/>
            <person name="Banno F."/>
            <person name="Bowser L."/>
            <person name="Brooks S.Y."/>
            <person name="Carninci P."/>
            <person name="Chao Q."/>
            <person name="Choy N."/>
            <person name="Enju A."/>
            <person name="Goldsmith A.D."/>
            <person name="Gurjal M."/>
            <person name="Hansen N.F."/>
            <person name="Hayashizaki Y."/>
            <person name="Johnson-Hopson C."/>
            <person name="Hsuan V.W."/>
            <person name="Iida K."/>
            <person name="Karnes M."/>
            <person name="Khan S."/>
            <person name="Koesema E."/>
            <person name="Ishida J."/>
            <person name="Jiang P.X."/>
            <person name="Jones T."/>
            <person name="Kawai J."/>
            <person name="Kamiya A."/>
            <person name="Meyers C."/>
            <person name="Nakajima M."/>
            <person name="Narusaka M."/>
            <person name="Seki M."/>
            <person name="Sakurai T."/>
            <person name="Satou M."/>
            <person name="Tamse R."/>
            <person name="Vaysberg M."/>
            <person name="Wallender E.K."/>
            <person name="Wong C."/>
            <person name="Yamamura Y."/>
            <person name="Yuan S."/>
            <person name="Shinozaki K."/>
            <person name="Davis R.W."/>
            <person name="Theologis A."/>
            <person name="Ecker J.R."/>
        </authorList>
    </citation>
    <scope>NUCLEOTIDE SEQUENCE [LARGE SCALE MRNA]</scope>
    <source>
        <strain>cv. Columbia</strain>
    </source>
</reference>
<reference key="6">
    <citation type="submission" date="2002-03" db="EMBL/GenBank/DDBJ databases">
        <title>Full-length cDNA from Arabidopsis thaliana.</title>
        <authorList>
            <person name="Brover V.V."/>
            <person name="Troukhan M.E."/>
            <person name="Alexandrov N.A."/>
            <person name="Lu Y.-P."/>
            <person name="Flavell R.B."/>
            <person name="Feldmann K.A."/>
        </authorList>
    </citation>
    <scope>NUCLEOTIDE SEQUENCE [LARGE SCALE MRNA]</scope>
</reference>
<reference key="7">
    <citation type="journal article" date="2005" name="Bot. Bull. Acad. Sin.">
        <title>Characterization of a novel Arabidopsis protein family AtMAPR homologous to 25-Dx/IZAg/Hpr6.6 proteins.</title>
        <authorList>
            <person name="Kao A.L."/>
            <person name="Chang T.Y."/>
            <person name="Chang S.H."/>
            <person name="Su J.C."/>
            <person name="Yang C.C."/>
        </authorList>
    </citation>
    <scope>NOMENCLATURE</scope>
</reference>
<reference key="8">
    <citation type="journal article" date="2009" name="Cell Res.">
        <title>Membrane steroid-binding protein 1 (MSBP1) negatively regulates brassinosteroid signaling by enhancing the endocytosis of BAK1.</title>
        <authorList>
            <person name="Song L."/>
            <person name="Shi Q.M."/>
            <person name="Yang X.H."/>
            <person name="Xu Z.H."/>
            <person name="Xue H.W."/>
        </authorList>
    </citation>
    <scope>FUNCTION</scope>
    <scope>SUBCELLULAR LOCATION</scope>
    <scope>INTERACTION WITH BAK1</scope>
</reference>
<gene>
    <name type="primary">MSBP1</name>
    <name evidence="6" type="synonym">MAPR5</name>
    <name type="synonym">MP1</name>
    <name type="ordered locus">At5g52240</name>
    <name type="ORF">F17P19.14</name>
</gene>
<name>MSBP1_ARATH</name>
<proteinExistence type="evidence at protein level"/>
<organism>
    <name type="scientific">Arabidopsis thaliana</name>
    <name type="common">Mouse-ear cress</name>
    <dbReference type="NCBI Taxonomy" id="3702"/>
    <lineage>
        <taxon>Eukaryota</taxon>
        <taxon>Viridiplantae</taxon>
        <taxon>Streptophyta</taxon>
        <taxon>Embryophyta</taxon>
        <taxon>Tracheophyta</taxon>
        <taxon>Spermatophyta</taxon>
        <taxon>Magnoliopsida</taxon>
        <taxon>eudicotyledons</taxon>
        <taxon>Gunneridae</taxon>
        <taxon>Pentapetalae</taxon>
        <taxon>rosids</taxon>
        <taxon>malvids</taxon>
        <taxon>Brassicales</taxon>
        <taxon>Brassicaceae</taxon>
        <taxon>Camelineae</taxon>
        <taxon>Arabidopsis</taxon>
    </lineage>
</organism>
<protein>
    <recommendedName>
        <fullName>Membrane steroid-binding protein 1</fullName>
        <shortName>AtMP1</shortName>
    </recommendedName>
    <alternativeName>
        <fullName evidence="6">Membrane-associated progesterone-binding protein 5</fullName>
        <shortName evidence="6">AtMAPR5</shortName>
    </alternativeName>
</protein>
<evidence type="ECO:0000250" key="1"/>
<evidence type="ECO:0000255" key="2"/>
<evidence type="ECO:0000256" key="3">
    <source>
        <dbReference type="SAM" id="MobiDB-lite"/>
    </source>
</evidence>
<evidence type="ECO:0000269" key="4">
    <source>
    </source>
</evidence>
<evidence type="ECO:0000269" key="5">
    <source>
    </source>
</evidence>
<evidence type="ECO:0000303" key="6">
    <source ref="7"/>
</evidence>
<evidence type="ECO:0000305" key="7"/>
<comment type="function">
    <text evidence="5">MSBP1 can bind to multiple steroid compounds with different affinities. Negatively regulates cell elongation and brassinosteroid signaling. May act as a coreceptor with BAK1 and enhances its endocytosis.</text>
</comment>
<comment type="biophysicochemical properties">
    <kinetics>
        <text>Kinetic studies indicated that MSBP1 has highest affinity to progesterone, followed by 5-alpha-dihydrotestosterone, 24-epi-brassinolide and stigmasterol.</text>
    </kinetics>
</comment>
<comment type="subunit">
    <text evidence="5">Interacts with BAK1 (via extracellular region).</text>
</comment>
<comment type="subcellular location">
    <subcellularLocation>
        <location evidence="7">Cell membrane</location>
        <topology evidence="7">Single-pass type II membrane protein</topology>
    </subcellularLocation>
    <subcellularLocation>
        <location evidence="7">Endosome membrane</location>
        <topology evidence="7">Single-pass type II membrane protein</topology>
    </subcellularLocation>
</comment>
<comment type="alternative products">
    <event type="alternative splicing"/>
    <isoform>
        <id>Q9XFM6-1</id>
        <name>1</name>
        <sequence type="displayed"/>
    </isoform>
    <text>A number of isoforms are produced. According to EST sequences.</text>
</comment>
<comment type="tissue specificity">
    <text evidence="4">Expressed in cotyledons, stems, roots, leaves, flower and silique stalks, pistils and stigmas, but not in anthers.</text>
</comment>
<comment type="developmental stage">
    <text>Expressed under darkness or light during initial stages of germination. Highly expressed in hypocotyls during days 3 to 7 after germination under light but almost undetectable in darkness.</text>
</comment>
<comment type="induction">
    <text>Not induced by phytohormones and strongly suppressed in darkness.</text>
</comment>
<comment type="domain">
    <text evidence="7">The cytochrome b5 heme-binding domain lacks the conserved iron-binding His residues at positions 109 and 133.</text>
</comment>
<comment type="miscellaneous">
    <text>Regulated by both phytochromes and cryptochromes.</text>
</comment>
<comment type="similarity">
    <text evidence="7">Belongs to the cytochrome b5 family. MAPR subfamily.</text>
</comment>
<sequence>MALELWQTLKEAIHAYTGLSPVVFFTALALAFAIYQVISGWFASPFDDVNRHQRARSLAQEEEPPIPQPVQVGEITEEELKQYDGSDPQKPLLMAIKHQIYDVTQSRMFYGPGGPYALFAGKDASRALAKMSFEEKDLTWDVSGLGPFELDALQDWEYKFMSKYAKVGTVKVAGSEPETASVSEPTENVEQDAHVTTTPGKTVVDKSDDAPAETVLKKEE</sequence>
<keyword id="KW-0025">Alternative splicing</keyword>
<keyword id="KW-1003">Cell membrane</keyword>
<keyword id="KW-0967">Endosome</keyword>
<keyword id="KW-0446">Lipid-binding</keyword>
<keyword id="KW-0472">Membrane</keyword>
<keyword id="KW-1185">Reference proteome</keyword>
<keyword id="KW-0735">Signal-anchor</keyword>
<keyword id="KW-0754">Steroid-binding</keyword>
<keyword id="KW-0812">Transmembrane</keyword>
<keyword id="KW-1133">Transmembrane helix</keyword>
<feature type="chain" id="PRO_0000121748" description="Membrane steroid-binding protein 1">
    <location>
        <begin position="1"/>
        <end position="220"/>
    </location>
</feature>
<feature type="transmembrane region" description="Helical" evidence="2">
    <location>
        <begin position="22"/>
        <end position="42"/>
    </location>
</feature>
<feature type="domain" description="Cytochrome b5 heme-binding">
    <location>
        <begin position="74"/>
        <end position="171"/>
    </location>
</feature>
<feature type="region of interest" description="Steroid-binding" evidence="1">
    <location>
        <begin position="74"/>
        <end position="171"/>
    </location>
</feature>
<feature type="region of interest" description="Disordered" evidence="3">
    <location>
        <begin position="174"/>
        <end position="220"/>
    </location>
</feature>
<feature type="compositionally biased region" description="Polar residues" evidence="3">
    <location>
        <begin position="178"/>
        <end position="200"/>
    </location>
</feature>
<feature type="compositionally biased region" description="Basic and acidic residues" evidence="3">
    <location>
        <begin position="203"/>
        <end position="220"/>
    </location>
</feature>
<feature type="sequence conflict" description="In Ref. 2; AAD34616 and 6; AAM63860." evidence="7" ref="2 6">
    <original>V</original>
    <variation>I</variation>
    <location>
        <position position="142"/>
    </location>
</feature>
<feature type="sequence conflict" description="In Ref. 2; AAD34616 and 6; AAM63860." evidence="7" ref="2 6">
    <original>G</original>
    <variation>E</variation>
    <location>
        <position position="200"/>
    </location>
</feature>
<dbReference type="EMBL" id="AF153284">
    <property type="protein sequence ID" value="AAD34616.1"/>
    <property type="molecule type" value="mRNA"/>
</dbReference>
<dbReference type="EMBL" id="AB025603">
    <property type="protein sequence ID" value="BAA97467.1"/>
    <property type="molecule type" value="Genomic_DNA"/>
</dbReference>
<dbReference type="EMBL" id="CP002688">
    <property type="protein sequence ID" value="AED96190.1"/>
    <property type="molecule type" value="Genomic_DNA"/>
</dbReference>
<dbReference type="EMBL" id="BT000922">
    <property type="protein sequence ID" value="AAN41322.1"/>
    <property type="molecule type" value="mRNA"/>
</dbReference>
<dbReference type="EMBL" id="AY086811">
    <property type="protein sequence ID" value="AAM63860.1"/>
    <property type="molecule type" value="mRNA"/>
</dbReference>
<dbReference type="RefSeq" id="NP_200037.1">
    <molecule id="Q9XFM6-1"/>
    <property type="nucleotide sequence ID" value="NM_124603.4"/>
</dbReference>
<dbReference type="SMR" id="Q9XFM6"/>
<dbReference type="BioGRID" id="20545">
    <property type="interactions" value="57"/>
</dbReference>
<dbReference type="FunCoup" id="Q9XFM6">
    <property type="interactions" value="3276"/>
</dbReference>
<dbReference type="IntAct" id="Q9XFM6">
    <property type="interactions" value="53"/>
</dbReference>
<dbReference type="STRING" id="3702.Q9XFM6"/>
<dbReference type="iPTMnet" id="Q9XFM6"/>
<dbReference type="PaxDb" id="3702-AT5G52240.1"/>
<dbReference type="ProteomicsDB" id="250873">
    <molecule id="Q9XFM6-1"/>
</dbReference>
<dbReference type="EnsemblPlants" id="AT5G52240.1">
    <molecule id="Q9XFM6-1"/>
    <property type="protein sequence ID" value="AT5G52240.1"/>
    <property type="gene ID" value="AT5G52240"/>
</dbReference>
<dbReference type="GeneID" id="835300"/>
<dbReference type="Gramene" id="AT5G52240.1">
    <molecule id="Q9XFM6-1"/>
    <property type="protein sequence ID" value="AT5G52240.1"/>
    <property type="gene ID" value="AT5G52240"/>
</dbReference>
<dbReference type="KEGG" id="ath:AT5G52240"/>
<dbReference type="Araport" id="AT5G52240"/>
<dbReference type="TAIR" id="AT5G52240">
    <property type="gene designation" value="MSBP1"/>
</dbReference>
<dbReference type="eggNOG" id="KOG1110">
    <property type="taxonomic scope" value="Eukaryota"/>
</dbReference>
<dbReference type="HOGENOM" id="CLU_042860_0_2_1"/>
<dbReference type="InParanoid" id="Q9XFM6"/>
<dbReference type="PhylomeDB" id="Q9XFM6"/>
<dbReference type="PRO" id="PR:Q9XFM6"/>
<dbReference type="Proteomes" id="UP000006548">
    <property type="component" value="Chromosome 5"/>
</dbReference>
<dbReference type="ExpressionAtlas" id="Q9XFM6">
    <property type="expression patterns" value="baseline and differential"/>
</dbReference>
<dbReference type="GO" id="GO:0005783">
    <property type="term" value="C:endoplasmic reticulum"/>
    <property type="evidence" value="ECO:0000314"/>
    <property type="project" value="TAIR"/>
</dbReference>
<dbReference type="GO" id="GO:0010008">
    <property type="term" value="C:endosome membrane"/>
    <property type="evidence" value="ECO:0007669"/>
    <property type="project" value="UniProtKB-SubCell"/>
</dbReference>
<dbReference type="GO" id="GO:0005794">
    <property type="term" value="C:Golgi apparatus"/>
    <property type="evidence" value="ECO:0007005"/>
    <property type="project" value="TAIR"/>
</dbReference>
<dbReference type="GO" id="GO:0005886">
    <property type="term" value="C:plasma membrane"/>
    <property type="evidence" value="ECO:0000314"/>
    <property type="project" value="TAIR"/>
</dbReference>
<dbReference type="GO" id="GO:0009536">
    <property type="term" value="C:plastid"/>
    <property type="evidence" value="ECO:0007005"/>
    <property type="project" value="TAIR"/>
</dbReference>
<dbReference type="GO" id="GO:0005496">
    <property type="term" value="F:steroid binding"/>
    <property type="evidence" value="ECO:0000314"/>
    <property type="project" value="TAIR"/>
</dbReference>
<dbReference type="GO" id="GO:0030308">
    <property type="term" value="P:negative regulation of cell growth"/>
    <property type="evidence" value="ECO:0000315"/>
    <property type="project" value="TAIR"/>
</dbReference>
<dbReference type="GO" id="GO:1901141">
    <property type="term" value="P:regulation of lignin biosynthetic process"/>
    <property type="evidence" value="ECO:0000315"/>
    <property type="project" value="TAIR"/>
</dbReference>
<dbReference type="FunFam" id="3.10.120.10:FF:000006">
    <property type="entry name" value="Membrane steroid-binding protein 1"/>
    <property type="match status" value="1"/>
</dbReference>
<dbReference type="Gene3D" id="3.10.120.10">
    <property type="entry name" value="Cytochrome b5-like heme/steroid binding domain"/>
    <property type="match status" value="1"/>
</dbReference>
<dbReference type="InterPro" id="IPR001199">
    <property type="entry name" value="Cyt_B5-like_heme/steroid-bd"/>
</dbReference>
<dbReference type="InterPro" id="IPR036400">
    <property type="entry name" value="Cyt_B5-like_heme/steroid_sf"/>
</dbReference>
<dbReference type="InterPro" id="IPR050577">
    <property type="entry name" value="MAPR/NEUFC/NENF-like"/>
</dbReference>
<dbReference type="PANTHER" id="PTHR10281:SF74">
    <property type="entry name" value="MEMBRANE STEROID-BINDING PROTEIN 1"/>
    <property type="match status" value="1"/>
</dbReference>
<dbReference type="PANTHER" id="PTHR10281">
    <property type="entry name" value="MEMBRANE-ASSOCIATED PROGESTERONE RECEPTOR COMPONENT-RELATED"/>
    <property type="match status" value="1"/>
</dbReference>
<dbReference type="Pfam" id="PF00173">
    <property type="entry name" value="Cyt-b5"/>
    <property type="match status" value="1"/>
</dbReference>
<dbReference type="SMART" id="SM01117">
    <property type="entry name" value="Cyt-b5"/>
    <property type="match status" value="1"/>
</dbReference>
<dbReference type="SUPFAM" id="SSF55856">
    <property type="entry name" value="Cytochrome b5-like heme/steroid binding domain"/>
    <property type="match status" value="1"/>
</dbReference>
<accession>Q9XFM6</accession>
<accession>Q9LTJ7</accession>